<comment type="function">
    <text evidence="1">Has an important function as a repair enzyme for proteins that have been inactivated by oxidation. Catalyzes the reversible oxidation-reduction of methionine sulfoxide in proteins to methionine.</text>
</comment>
<comment type="catalytic activity">
    <reaction evidence="1">
        <text>L-methionyl-[protein] + [thioredoxin]-disulfide + H2O = L-methionyl-(S)-S-oxide-[protein] + [thioredoxin]-dithiol</text>
        <dbReference type="Rhea" id="RHEA:14217"/>
        <dbReference type="Rhea" id="RHEA-COMP:10698"/>
        <dbReference type="Rhea" id="RHEA-COMP:10700"/>
        <dbReference type="Rhea" id="RHEA-COMP:12313"/>
        <dbReference type="Rhea" id="RHEA-COMP:12315"/>
        <dbReference type="ChEBI" id="CHEBI:15377"/>
        <dbReference type="ChEBI" id="CHEBI:16044"/>
        <dbReference type="ChEBI" id="CHEBI:29950"/>
        <dbReference type="ChEBI" id="CHEBI:44120"/>
        <dbReference type="ChEBI" id="CHEBI:50058"/>
        <dbReference type="EC" id="1.8.4.11"/>
    </reaction>
</comment>
<comment type="catalytic activity">
    <reaction evidence="1">
        <text>[thioredoxin]-disulfide + L-methionine + H2O = L-methionine (S)-S-oxide + [thioredoxin]-dithiol</text>
        <dbReference type="Rhea" id="RHEA:19993"/>
        <dbReference type="Rhea" id="RHEA-COMP:10698"/>
        <dbReference type="Rhea" id="RHEA-COMP:10700"/>
        <dbReference type="ChEBI" id="CHEBI:15377"/>
        <dbReference type="ChEBI" id="CHEBI:29950"/>
        <dbReference type="ChEBI" id="CHEBI:50058"/>
        <dbReference type="ChEBI" id="CHEBI:57844"/>
        <dbReference type="ChEBI" id="CHEBI:58772"/>
        <dbReference type="EC" id="1.8.4.11"/>
    </reaction>
</comment>
<comment type="similarity">
    <text evidence="1">Belongs to the MsrA Met sulfoxide reductase family.</text>
</comment>
<evidence type="ECO:0000255" key="1">
    <source>
        <dbReference type="HAMAP-Rule" id="MF_01401"/>
    </source>
</evidence>
<proteinExistence type="inferred from homology"/>
<gene>
    <name evidence="1" type="primary">msrA</name>
    <name type="ordered locus">Ent638_0397</name>
</gene>
<protein>
    <recommendedName>
        <fullName evidence="1">Peptide methionine sulfoxide reductase MsrA</fullName>
        <shortName evidence="1">Protein-methionine-S-oxide reductase</shortName>
        <ecNumber evidence="1">1.8.4.11</ecNumber>
    </recommendedName>
    <alternativeName>
        <fullName evidence="1">Peptide-methionine (S)-S-oxide reductase</fullName>
        <shortName evidence="1">Peptide Met(O) reductase</shortName>
    </alternativeName>
</protein>
<feature type="chain" id="PRO_1000068327" description="Peptide methionine sulfoxide reductase MsrA">
    <location>
        <begin position="1"/>
        <end position="213"/>
    </location>
</feature>
<feature type="active site" evidence="1">
    <location>
        <position position="52"/>
    </location>
</feature>
<reference key="1">
    <citation type="journal article" date="2010" name="PLoS Genet.">
        <title>Genome sequence of the plant growth promoting endophytic bacterium Enterobacter sp. 638.</title>
        <authorList>
            <person name="Taghavi S."/>
            <person name="van der Lelie D."/>
            <person name="Hoffman A."/>
            <person name="Zhang Y.B."/>
            <person name="Walla M.D."/>
            <person name="Vangronsveld J."/>
            <person name="Newman L."/>
            <person name="Monchy S."/>
        </authorList>
    </citation>
    <scope>NUCLEOTIDE SEQUENCE [LARGE SCALE GENOMIC DNA]</scope>
    <source>
        <strain>638</strain>
    </source>
</reference>
<organism>
    <name type="scientific">Enterobacter sp. (strain 638)</name>
    <dbReference type="NCBI Taxonomy" id="399742"/>
    <lineage>
        <taxon>Bacteria</taxon>
        <taxon>Pseudomonadati</taxon>
        <taxon>Pseudomonadota</taxon>
        <taxon>Gammaproteobacteria</taxon>
        <taxon>Enterobacterales</taxon>
        <taxon>Enterobacteriaceae</taxon>
        <taxon>Enterobacter</taxon>
    </lineage>
</organism>
<keyword id="KW-0560">Oxidoreductase</keyword>
<sequence>MSLFDKKQLVSQADALPGRNTPMPVATLHAVNNHSMTNVPDGMEIALFAMGCFWGVERLFWQLPGVYSTAAGYTGGYTPNPTYREVCSGETGHAEAVRIVYDPSVTRYEQLLQVFWENHDPAQGMQQGNDHGTQYRSAIYPLTPEQDAAARASLARFQDAMQAAGDHRTVTTEIANATPFYYAEDDHQQYLHKNPYGYCGIGGIGICLPPQLA</sequence>
<name>MSRA_ENT38</name>
<dbReference type="EC" id="1.8.4.11" evidence="1"/>
<dbReference type="EMBL" id="CP000653">
    <property type="protein sequence ID" value="ABP59085.1"/>
    <property type="molecule type" value="Genomic_DNA"/>
</dbReference>
<dbReference type="RefSeq" id="WP_012015810.1">
    <property type="nucleotide sequence ID" value="NC_009436.1"/>
</dbReference>
<dbReference type="SMR" id="A4W5V5"/>
<dbReference type="STRING" id="399742.Ent638_0397"/>
<dbReference type="KEGG" id="ent:Ent638_0397"/>
<dbReference type="eggNOG" id="COG0225">
    <property type="taxonomic scope" value="Bacteria"/>
</dbReference>
<dbReference type="HOGENOM" id="CLU_031040_10_3_6"/>
<dbReference type="OrthoDB" id="4174719at2"/>
<dbReference type="Proteomes" id="UP000000230">
    <property type="component" value="Chromosome"/>
</dbReference>
<dbReference type="GO" id="GO:0005737">
    <property type="term" value="C:cytoplasm"/>
    <property type="evidence" value="ECO:0007669"/>
    <property type="project" value="TreeGrafter"/>
</dbReference>
<dbReference type="GO" id="GO:0036456">
    <property type="term" value="F:L-methionine-(S)-S-oxide reductase activity"/>
    <property type="evidence" value="ECO:0007669"/>
    <property type="project" value="TreeGrafter"/>
</dbReference>
<dbReference type="GO" id="GO:0008113">
    <property type="term" value="F:peptide-methionine (S)-S-oxide reductase activity"/>
    <property type="evidence" value="ECO:0007669"/>
    <property type="project" value="UniProtKB-UniRule"/>
</dbReference>
<dbReference type="GO" id="GO:0034599">
    <property type="term" value="P:cellular response to oxidative stress"/>
    <property type="evidence" value="ECO:0007669"/>
    <property type="project" value="TreeGrafter"/>
</dbReference>
<dbReference type="GO" id="GO:0036211">
    <property type="term" value="P:protein modification process"/>
    <property type="evidence" value="ECO:0007669"/>
    <property type="project" value="UniProtKB-UniRule"/>
</dbReference>
<dbReference type="FunFam" id="3.30.1060.10:FF:000001">
    <property type="entry name" value="Peptide methionine sulfoxide reductase MsrA"/>
    <property type="match status" value="1"/>
</dbReference>
<dbReference type="Gene3D" id="3.30.1060.10">
    <property type="entry name" value="Peptide methionine sulphoxide reductase MsrA"/>
    <property type="match status" value="1"/>
</dbReference>
<dbReference type="HAMAP" id="MF_01401">
    <property type="entry name" value="MsrA"/>
    <property type="match status" value="1"/>
</dbReference>
<dbReference type="InterPro" id="IPR002569">
    <property type="entry name" value="Met_Sox_Rdtase_MsrA_dom"/>
</dbReference>
<dbReference type="InterPro" id="IPR036509">
    <property type="entry name" value="Met_Sox_Rdtase_MsrA_sf"/>
</dbReference>
<dbReference type="InterPro" id="IPR050162">
    <property type="entry name" value="MsrA_MetSO_reductase"/>
</dbReference>
<dbReference type="NCBIfam" id="TIGR00401">
    <property type="entry name" value="msrA"/>
    <property type="match status" value="1"/>
</dbReference>
<dbReference type="PANTHER" id="PTHR42799">
    <property type="entry name" value="MITOCHONDRIAL PEPTIDE METHIONINE SULFOXIDE REDUCTASE"/>
    <property type="match status" value="1"/>
</dbReference>
<dbReference type="PANTHER" id="PTHR42799:SF2">
    <property type="entry name" value="MITOCHONDRIAL PEPTIDE METHIONINE SULFOXIDE REDUCTASE"/>
    <property type="match status" value="1"/>
</dbReference>
<dbReference type="Pfam" id="PF01625">
    <property type="entry name" value="PMSR"/>
    <property type="match status" value="1"/>
</dbReference>
<dbReference type="SUPFAM" id="SSF55068">
    <property type="entry name" value="Peptide methionine sulfoxide reductase"/>
    <property type="match status" value="1"/>
</dbReference>
<accession>A4W5V5</accession>